<accession>Q45212</accession>
<gene>
    <name evidence="6 10" type="primary">vsp2</name>
    <name evidence="5" type="synonym">vmp2</name>
</gene>
<sequence length="215" mass="22690">MRKRISAIIMTLFMVFMSCNNGGPELKSDEVAKSDGTVLDLAKISKKIKDAVEFAASVKEIETLVKSIDELAKTIGQKLTKDTGVLAADANNNNGGLIAGVYGIVTDVGTKLDGLLKVNGISEDIKTKINDSKSKGTAFLSKVKGDDDLCKKDATDAHAKNAIDKNDNTGGKGKTELIALNTAIDELLKAANEAVEAAIKELTAPVKAEKPSQNN</sequence>
<geneLocation type="plasmid" evidence="10">
    <name>lp40</name>
</geneLocation>
<protein>
    <recommendedName>
        <fullName evidence="6">Variable small protein 2</fullName>
    </recommendedName>
</protein>
<keyword id="KW-0998">Cell outer membrane</keyword>
<keyword id="KW-0449">Lipoprotein</keyword>
<keyword id="KW-0472">Membrane</keyword>
<keyword id="KW-0564">Palmitate</keyword>
<keyword id="KW-0614">Plasmid</keyword>
<keyword id="KW-0732">Signal</keyword>
<organism>
    <name type="scientific">Borrelia hermsii</name>
    <dbReference type="NCBI Taxonomy" id="140"/>
    <lineage>
        <taxon>Bacteria</taxon>
        <taxon>Pseudomonadati</taxon>
        <taxon>Spirochaetota</taxon>
        <taxon>Spirochaetia</taxon>
        <taxon>Spirochaetales</taxon>
        <taxon>Borreliaceae</taxon>
        <taxon>Borrelia</taxon>
    </lineage>
</organism>
<evidence type="ECO:0000250" key="1">
    <source>
        <dbReference type="UniProtKB" id="P21875"/>
    </source>
</evidence>
<evidence type="ECO:0000255" key="2"/>
<evidence type="ECO:0000255" key="3">
    <source>
        <dbReference type="PROSITE-ProRule" id="PRU00303"/>
    </source>
</evidence>
<evidence type="ECO:0000269" key="4">
    <source>
    </source>
</evidence>
<evidence type="ECO:0000303" key="5">
    <source>
    </source>
</evidence>
<evidence type="ECO:0000303" key="6">
    <source>
    </source>
</evidence>
<evidence type="ECO:0000305" key="7"/>
<evidence type="ECO:0000305" key="8">
    <source>
    </source>
</evidence>
<evidence type="ECO:0000312" key="9">
    <source>
        <dbReference type="EMBL" id="AAA59223.1"/>
    </source>
</evidence>
<evidence type="ECO:0000312" key="10">
    <source>
        <dbReference type="EMBL" id="AAF73948.1"/>
    </source>
</evidence>
<comment type="function">
    <text evidence="1">The Vlp and Vsp proteins are antigenically distinct proteins, only one vlp or vsp gene is transcriptionally active at any one time. Switching between these genes is a mechanism of host immune response evasion.</text>
</comment>
<comment type="subcellular location">
    <subcellularLocation>
        <location evidence="1">Cell outer membrane</location>
        <topology>Lipid-anchor</topology>
    </subcellularLocation>
</comment>
<comment type="miscellaneous">
    <text evidence="8">Genes for both Vlp and Vsp families are on (usually) unnamed linear plasmids in B.hermsii HS1.</text>
</comment>
<comment type="similarity">
    <text evidence="4">Belongs to the variable small protein (Vsp) family.</text>
</comment>
<proteinExistence type="inferred from homology"/>
<name>VSP2_BORHE</name>
<feature type="signal peptide" evidence="3">
    <location>
        <begin position="1"/>
        <end position="18"/>
    </location>
</feature>
<feature type="chain" id="PRO_0000244510" description="Variable small protein 2" evidence="2">
    <location>
        <begin position="19"/>
        <end position="215"/>
    </location>
</feature>
<feature type="lipid moiety-binding region" description="N-palmitoyl cysteine" evidence="2 7">
    <location>
        <position position="19"/>
    </location>
</feature>
<feature type="lipid moiety-binding region" description="S-diacylglycerol cysteine" evidence="2 7">
    <location>
        <position position="19"/>
    </location>
</feature>
<dbReference type="EMBL" id="L33897">
    <property type="protein sequence ID" value="AAA59223.1"/>
    <property type="molecule type" value="Genomic_DNA"/>
</dbReference>
<dbReference type="EMBL" id="AF236048">
    <property type="protein sequence ID" value="AAF73948.1"/>
    <property type="molecule type" value="Genomic_DNA"/>
</dbReference>
<dbReference type="RefSeq" id="WP_015633346.1">
    <property type="nucleotide sequence ID" value="NZ_OL311417.1"/>
</dbReference>
<dbReference type="SMR" id="Q45212"/>
<dbReference type="OrthoDB" id="352157at2"/>
<dbReference type="GO" id="GO:0009279">
    <property type="term" value="C:cell outer membrane"/>
    <property type="evidence" value="ECO:0007669"/>
    <property type="project" value="UniProtKB-SubCell"/>
</dbReference>
<dbReference type="Gene3D" id="1.20.120.240">
    <property type="entry name" value="Lipoprotein, type 6"/>
    <property type="match status" value="1"/>
</dbReference>
<dbReference type="InterPro" id="IPR001800">
    <property type="entry name" value="Lipoprotein_OspC"/>
</dbReference>
<dbReference type="InterPro" id="IPR036437">
    <property type="entry name" value="OspC-like_sf"/>
</dbReference>
<dbReference type="Pfam" id="PF01441">
    <property type="entry name" value="Lipoprotein_6"/>
    <property type="match status" value="1"/>
</dbReference>
<dbReference type="SUPFAM" id="SSF63515">
    <property type="entry name" value="Outer surface protein C (OspC)"/>
    <property type="match status" value="1"/>
</dbReference>
<dbReference type="PROSITE" id="PS51257">
    <property type="entry name" value="PROKAR_LIPOPROTEIN"/>
    <property type="match status" value="1"/>
</dbReference>
<reference evidence="9" key="1">
    <citation type="journal article" date="1994" name="Cell">
        <title>Antigen diversity in the bacterium B. hermsii through 'somatic' mutations in rearranged vmp genes.</title>
        <authorList>
            <person name="Restrepo B.I."/>
            <person name="Barbour A.G."/>
        </authorList>
    </citation>
    <scope>NUCLEOTIDE SEQUENCE [GENOMIC DNA]</scope>
    <source>
        <strain>ATCC 35209 / HS1</strain>
    </source>
</reference>
<reference evidence="10" key="2">
    <citation type="journal article" date="2000" name="Infect. Immun.">
        <title>Surface protein variation by expression site switching in the relapsing fever agent Borrelia hermsii.</title>
        <authorList>
            <person name="Barbour A.G."/>
            <person name="Carter C.J."/>
            <person name="Sohaskey C.D."/>
        </authorList>
    </citation>
    <scope>NUCLEOTIDE SEQUENCE [GENOMIC DNA]</scope>
    <source>
        <strain>ATCC 35209 / HS1</strain>
        <plasmid>lp40</plasmid>
    </source>
</reference>
<reference evidence="7" key="3">
    <citation type="journal article" date="1998" name="Infect. Immun.">
        <title>Population structure of the relapsing fever spirochete Borrelia hermsii as indicated by polymorphism of two multigene families that encode immunogenic outer surface lipoproteins.</title>
        <authorList>
            <person name="Hinnebusch B.J."/>
            <person name="Barbour A.G."/>
            <person name="Restrepo B.I."/>
            <person name="Schwan T.G."/>
        </authorList>
    </citation>
    <scope>NOMENCLATURE</scope>
</reference>